<gene>
    <name type="primary">rcf1-B</name>
    <name type="synonym">aim31</name>
    <name type="ORF">PMAA_094690</name>
</gene>
<accession>B6QHL8</accession>
<keyword id="KW-0175">Coiled coil</keyword>
<keyword id="KW-0472">Membrane</keyword>
<keyword id="KW-0496">Mitochondrion</keyword>
<keyword id="KW-1185">Reference proteome</keyword>
<keyword id="KW-0812">Transmembrane</keyword>
<keyword id="KW-1133">Transmembrane helix</keyword>
<sequence>MADQADVLADPDFEEETSIQKFKRRLKEEPLIPLGCAATCYALYRAYRSGKAKDSVEMNRMFRARIYAQFFTLLAVVAGGMYYKTERKQRREFEKKVEERKAQEKRDAWLRELEARDKEDKGWKERHAAVSVTAKKETEGAVDKNVNQAPTEEVVEKRGTGILDAVKALVQGKKD</sequence>
<evidence type="ECO:0000250" key="1"/>
<evidence type="ECO:0000255" key="2"/>
<evidence type="ECO:0000255" key="3">
    <source>
        <dbReference type="PROSITE-ProRule" id="PRU00836"/>
    </source>
</evidence>
<evidence type="ECO:0000305" key="4"/>
<feature type="chain" id="PRO_0000399647" description="Respiratory supercomplex factor 1-B, mitochondrial">
    <location>
        <begin position="1"/>
        <end position="175"/>
    </location>
</feature>
<feature type="transmembrane region" description="Helical" evidence="3">
    <location>
        <begin position="30"/>
        <end position="46"/>
    </location>
</feature>
<feature type="transmembrane region" description="Helical" evidence="3">
    <location>
        <begin position="66"/>
        <end position="83"/>
    </location>
</feature>
<feature type="domain" description="HIG1" evidence="3">
    <location>
        <begin position="3"/>
        <end position="94"/>
    </location>
</feature>
<feature type="coiled-coil region" evidence="2">
    <location>
        <begin position="83"/>
        <end position="115"/>
    </location>
</feature>
<organism>
    <name type="scientific">Talaromyces marneffei (strain ATCC 18224 / CBS 334.59 / QM 7333)</name>
    <name type="common">Penicillium marneffei</name>
    <dbReference type="NCBI Taxonomy" id="441960"/>
    <lineage>
        <taxon>Eukaryota</taxon>
        <taxon>Fungi</taxon>
        <taxon>Dikarya</taxon>
        <taxon>Ascomycota</taxon>
        <taxon>Pezizomycotina</taxon>
        <taxon>Eurotiomycetes</taxon>
        <taxon>Eurotiomycetidae</taxon>
        <taxon>Eurotiales</taxon>
        <taxon>Trichocomaceae</taxon>
        <taxon>Talaromyces</taxon>
        <taxon>Talaromyces sect. Talaromyces</taxon>
    </lineage>
</organism>
<dbReference type="EMBL" id="DS995902">
    <property type="protein sequence ID" value="EEA22863.1"/>
    <property type="molecule type" value="Genomic_DNA"/>
</dbReference>
<dbReference type="RefSeq" id="XP_002149030.1">
    <property type="nucleotide sequence ID" value="XM_002148994.1"/>
</dbReference>
<dbReference type="STRING" id="441960.B6QHL8"/>
<dbReference type="VEuPathDB" id="FungiDB:PMAA_094690"/>
<dbReference type="OrthoDB" id="9835at28568"/>
<dbReference type="PhylomeDB" id="B6QHL8"/>
<dbReference type="Proteomes" id="UP000001294">
    <property type="component" value="Unassembled WGS sequence"/>
</dbReference>
<dbReference type="GO" id="GO:0031966">
    <property type="term" value="C:mitochondrial membrane"/>
    <property type="evidence" value="ECO:0007669"/>
    <property type="project" value="UniProtKB-SubCell"/>
</dbReference>
<dbReference type="GO" id="GO:0097250">
    <property type="term" value="P:mitochondrial respirasome assembly"/>
    <property type="evidence" value="ECO:0007669"/>
    <property type="project" value="TreeGrafter"/>
</dbReference>
<dbReference type="Gene3D" id="6.10.140.1320">
    <property type="match status" value="1"/>
</dbReference>
<dbReference type="InterPro" id="IPR007667">
    <property type="entry name" value="Hypoxia_induced_domain"/>
</dbReference>
<dbReference type="InterPro" id="IPR050355">
    <property type="entry name" value="RCF1"/>
</dbReference>
<dbReference type="PANTHER" id="PTHR12297:SF3">
    <property type="entry name" value="HIG1 DOMAIN FAMILY MEMBER 1A"/>
    <property type="match status" value="1"/>
</dbReference>
<dbReference type="PANTHER" id="PTHR12297">
    <property type="entry name" value="HYPOXIA-INDUCBILE GENE 1 HIG1 -RELATED"/>
    <property type="match status" value="1"/>
</dbReference>
<dbReference type="Pfam" id="PF04588">
    <property type="entry name" value="HIG_1_N"/>
    <property type="match status" value="1"/>
</dbReference>
<dbReference type="PROSITE" id="PS51503">
    <property type="entry name" value="HIG1"/>
    <property type="match status" value="1"/>
</dbReference>
<proteinExistence type="inferred from homology"/>
<protein>
    <recommendedName>
        <fullName>Respiratory supercomplex factor 1-B, mitochondrial</fullName>
    </recommendedName>
</protein>
<comment type="function">
    <text evidence="1">Cytochrome c oxidase subunit which plays a role in assembly of respiratory supercomplexes.</text>
</comment>
<comment type="subunit">
    <text evidence="1">Associates with the respiratory chain complex III/complex IV supercomplex.</text>
</comment>
<comment type="subcellular location">
    <subcellularLocation>
        <location evidence="3">Mitochondrion membrane</location>
        <topology evidence="3">Multi-pass membrane protein</topology>
    </subcellularLocation>
</comment>
<comment type="similarity">
    <text evidence="4">Belongs to the RCF1 family.</text>
</comment>
<reference key="1">
    <citation type="journal article" date="2015" name="Genome Announc.">
        <title>Genome sequence of the AIDS-associated pathogen Penicillium marneffei (ATCC18224) and its near taxonomic relative Talaromyces stipitatus (ATCC10500).</title>
        <authorList>
            <person name="Nierman W.C."/>
            <person name="Fedorova-Abrams N.D."/>
            <person name="Andrianopoulos A."/>
        </authorList>
    </citation>
    <scope>NUCLEOTIDE SEQUENCE [LARGE SCALE GENOMIC DNA]</scope>
    <source>
        <strain>ATCC 18224 / CBS 334.59 / QM 7333</strain>
    </source>
</reference>
<name>RCF1B_TALMQ</name>